<protein>
    <recommendedName>
        <fullName evidence="1">Small ribosomal subunit protein uS15</fullName>
    </recommendedName>
    <alternativeName>
        <fullName evidence="2">30S ribosomal protein S15</fullName>
    </alternativeName>
</protein>
<keyword id="KW-0687">Ribonucleoprotein</keyword>
<keyword id="KW-0689">Ribosomal protein</keyword>
<keyword id="KW-0694">RNA-binding</keyword>
<keyword id="KW-0699">rRNA-binding</keyword>
<sequence length="89" mass="10268">MSVADIKKSEIVAQFQRAQGDTGSPEVQVALLTARINELTGHFKEHMKDHHSRRGLLRMVSRRRKLLDYLKGRNPDSYRALIEKLGLRK</sequence>
<evidence type="ECO:0000255" key="1">
    <source>
        <dbReference type="HAMAP-Rule" id="MF_01343"/>
    </source>
</evidence>
<evidence type="ECO:0000305" key="2"/>
<comment type="function">
    <text evidence="1">One of the primary rRNA binding proteins, it binds directly to 16S rRNA where it helps nucleate assembly of the platform of the 30S subunit by binding and bridging several RNA helices of the 16S rRNA.</text>
</comment>
<comment type="function">
    <text evidence="1">Forms an intersubunit bridge (bridge B4) with the 23S rRNA of the 50S subunit in the ribosome.</text>
</comment>
<comment type="subunit">
    <text evidence="1">Part of the 30S ribosomal subunit. Forms a bridge to the 50S subunit in the 70S ribosome, contacting the 23S rRNA.</text>
</comment>
<comment type="similarity">
    <text evidence="1">Belongs to the universal ribosomal protein uS15 family.</text>
</comment>
<dbReference type="EMBL" id="BX640433">
    <property type="protein sequence ID" value="CAE38717.1"/>
    <property type="molecule type" value="Genomic_DNA"/>
</dbReference>
<dbReference type="RefSeq" id="WP_003814002.1">
    <property type="nucleotide sequence ID" value="NC_002928.3"/>
</dbReference>
<dbReference type="SMR" id="Q7W569"/>
<dbReference type="GeneID" id="93205217"/>
<dbReference type="KEGG" id="bpa:BPP3432"/>
<dbReference type="HOGENOM" id="CLU_148518_0_0_4"/>
<dbReference type="Proteomes" id="UP000001421">
    <property type="component" value="Chromosome"/>
</dbReference>
<dbReference type="GO" id="GO:0022627">
    <property type="term" value="C:cytosolic small ribosomal subunit"/>
    <property type="evidence" value="ECO:0007669"/>
    <property type="project" value="TreeGrafter"/>
</dbReference>
<dbReference type="GO" id="GO:0019843">
    <property type="term" value="F:rRNA binding"/>
    <property type="evidence" value="ECO:0007669"/>
    <property type="project" value="UniProtKB-UniRule"/>
</dbReference>
<dbReference type="GO" id="GO:0003735">
    <property type="term" value="F:structural constituent of ribosome"/>
    <property type="evidence" value="ECO:0007669"/>
    <property type="project" value="InterPro"/>
</dbReference>
<dbReference type="GO" id="GO:0006412">
    <property type="term" value="P:translation"/>
    <property type="evidence" value="ECO:0007669"/>
    <property type="project" value="UniProtKB-UniRule"/>
</dbReference>
<dbReference type="CDD" id="cd00353">
    <property type="entry name" value="Ribosomal_S15p_S13e"/>
    <property type="match status" value="1"/>
</dbReference>
<dbReference type="FunFam" id="1.10.287.10:FF:000002">
    <property type="entry name" value="30S ribosomal protein S15"/>
    <property type="match status" value="1"/>
</dbReference>
<dbReference type="Gene3D" id="6.10.250.3130">
    <property type="match status" value="1"/>
</dbReference>
<dbReference type="Gene3D" id="1.10.287.10">
    <property type="entry name" value="S15/NS1, RNA-binding"/>
    <property type="match status" value="1"/>
</dbReference>
<dbReference type="HAMAP" id="MF_01343_B">
    <property type="entry name" value="Ribosomal_uS15_B"/>
    <property type="match status" value="1"/>
</dbReference>
<dbReference type="InterPro" id="IPR000589">
    <property type="entry name" value="Ribosomal_uS15"/>
</dbReference>
<dbReference type="InterPro" id="IPR005290">
    <property type="entry name" value="Ribosomal_uS15_bac-type"/>
</dbReference>
<dbReference type="InterPro" id="IPR009068">
    <property type="entry name" value="uS15_NS1_RNA-bd_sf"/>
</dbReference>
<dbReference type="NCBIfam" id="TIGR00952">
    <property type="entry name" value="S15_bact"/>
    <property type="match status" value="1"/>
</dbReference>
<dbReference type="PANTHER" id="PTHR23321">
    <property type="entry name" value="RIBOSOMAL PROTEIN S15, BACTERIAL AND ORGANELLAR"/>
    <property type="match status" value="1"/>
</dbReference>
<dbReference type="PANTHER" id="PTHR23321:SF26">
    <property type="entry name" value="SMALL RIBOSOMAL SUBUNIT PROTEIN US15M"/>
    <property type="match status" value="1"/>
</dbReference>
<dbReference type="Pfam" id="PF00312">
    <property type="entry name" value="Ribosomal_S15"/>
    <property type="match status" value="1"/>
</dbReference>
<dbReference type="SMART" id="SM01387">
    <property type="entry name" value="Ribosomal_S15"/>
    <property type="match status" value="1"/>
</dbReference>
<dbReference type="SUPFAM" id="SSF47060">
    <property type="entry name" value="S15/NS1 RNA-binding domain"/>
    <property type="match status" value="1"/>
</dbReference>
<dbReference type="PROSITE" id="PS00362">
    <property type="entry name" value="RIBOSOMAL_S15"/>
    <property type="match status" value="1"/>
</dbReference>
<proteinExistence type="inferred from homology"/>
<name>RS15_BORPA</name>
<feature type="chain" id="PRO_0000115393" description="Small ribosomal subunit protein uS15">
    <location>
        <begin position="1"/>
        <end position="89"/>
    </location>
</feature>
<gene>
    <name evidence="1" type="primary">rpsO</name>
    <name type="ordered locus">BPP3432</name>
</gene>
<reference key="1">
    <citation type="journal article" date="2003" name="Nat. Genet.">
        <title>Comparative analysis of the genome sequences of Bordetella pertussis, Bordetella parapertussis and Bordetella bronchiseptica.</title>
        <authorList>
            <person name="Parkhill J."/>
            <person name="Sebaihia M."/>
            <person name="Preston A."/>
            <person name="Murphy L.D."/>
            <person name="Thomson N.R."/>
            <person name="Harris D.E."/>
            <person name="Holden M.T.G."/>
            <person name="Churcher C.M."/>
            <person name="Bentley S.D."/>
            <person name="Mungall K.L."/>
            <person name="Cerdeno-Tarraga A.-M."/>
            <person name="Temple L."/>
            <person name="James K.D."/>
            <person name="Harris B."/>
            <person name="Quail M.A."/>
            <person name="Achtman M."/>
            <person name="Atkin R."/>
            <person name="Baker S."/>
            <person name="Basham D."/>
            <person name="Bason N."/>
            <person name="Cherevach I."/>
            <person name="Chillingworth T."/>
            <person name="Collins M."/>
            <person name="Cronin A."/>
            <person name="Davis P."/>
            <person name="Doggett J."/>
            <person name="Feltwell T."/>
            <person name="Goble A."/>
            <person name="Hamlin N."/>
            <person name="Hauser H."/>
            <person name="Holroyd S."/>
            <person name="Jagels K."/>
            <person name="Leather S."/>
            <person name="Moule S."/>
            <person name="Norberczak H."/>
            <person name="O'Neil S."/>
            <person name="Ormond D."/>
            <person name="Price C."/>
            <person name="Rabbinowitsch E."/>
            <person name="Rutter S."/>
            <person name="Sanders M."/>
            <person name="Saunders D."/>
            <person name="Seeger K."/>
            <person name="Sharp S."/>
            <person name="Simmonds M."/>
            <person name="Skelton J."/>
            <person name="Squares R."/>
            <person name="Squares S."/>
            <person name="Stevens K."/>
            <person name="Unwin L."/>
            <person name="Whitehead S."/>
            <person name="Barrell B.G."/>
            <person name="Maskell D.J."/>
        </authorList>
    </citation>
    <scope>NUCLEOTIDE SEQUENCE [LARGE SCALE GENOMIC DNA]</scope>
    <source>
        <strain>12822 / ATCC BAA-587 / NCTC 13253</strain>
    </source>
</reference>
<accession>Q7W569</accession>
<organism>
    <name type="scientific">Bordetella parapertussis (strain 12822 / ATCC BAA-587 / NCTC 13253)</name>
    <dbReference type="NCBI Taxonomy" id="257311"/>
    <lineage>
        <taxon>Bacteria</taxon>
        <taxon>Pseudomonadati</taxon>
        <taxon>Pseudomonadota</taxon>
        <taxon>Betaproteobacteria</taxon>
        <taxon>Burkholderiales</taxon>
        <taxon>Alcaligenaceae</taxon>
        <taxon>Bordetella</taxon>
    </lineage>
</organism>